<proteinExistence type="inferred from homology"/>
<name>BEST6_CAEEL</name>
<comment type="subcellular location">
    <subcellularLocation>
        <location evidence="2">Membrane</location>
        <topology evidence="2">Multi-pass membrane protein</topology>
    </subcellularLocation>
</comment>
<comment type="similarity">
    <text evidence="2">Belongs to the anion channel-forming bestrophin (TC 1.A.46) family. Calcium-sensitive chloride channel subfamily.</text>
</comment>
<dbReference type="EMBL" id="FO080453">
    <property type="protein sequence ID" value="CCD63833.1"/>
    <property type="molecule type" value="Genomic_DNA"/>
</dbReference>
<dbReference type="PIR" id="T15468">
    <property type="entry name" value="T15468"/>
</dbReference>
<dbReference type="RefSeq" id="NP_001255268.1">
    <property type="nucleotide sequence ID" value="NM_001268339.2"/>
</dbReference>
<dbReference type="SMR" id="Q17851"/>
<dbReference type="FunCoup" id="Q17851">
    <property type="interactions" value="3"/>
</dbReference>
<dbReference type="STRING" id="6239.C09B9.3.1"/>
<dbReference type="PaxDb" id="6239-C09B9.3.1"/>
<dbReference type="EnsemblMetazoa" id="C09B9.3.1">
    <property type="protein sequence ID" value="C09B9.3.1"/>
    <property type="gene ID" value="WBGene00015628"/>
</dbReference>
<dbReference type="EnsemblMetazoa" id="C09B9.3.2">
    <property type="protein sequence ID" value="C09B9.3.2"/>
    <property type="gene ID" value="WBGene00015628"/>
</dbReference>
<dbReference type="GeneID" id="177270"/>
<dbReference type="KEGG" id="cel:CELE_C09B9.3"/>
<dbReference type="UCSC" id="C09B9.3">
    <property type="organism name" value="c. elegans"/>
</dbReference>
<dbReference type="AGR" id="WB:WBGene00015628"/>
<dbReference type="CTD" id="177270"/>
<dbReference type="WormBase" id="C09B9.3">
    <property type="protein sequence ID" value="CE44268"/>
    <property type="gene ID" value="WBGene00015628"/>
    <property type="gene designation" value="best-6"/>
</dbReference>
<dbReference type="eggNOG" id="KOG3547">
    <property type="taxonomic scope" value="Eukaryota"/>
</dbReference>
<dbReference type="GeneTree" id="ENSGT00940000169100"/>
<dbReference type="HOGENOM" id="CLU_018069_0_1_1"/>
<dbReference type="InParanoid" id="Q17851"/>
<dbReference type="OMA" id="CANTTCI"/>
<dbReference type="OrthoDB" id="201595at2759"/>
<dbReference type="PhylomeDB" id="Q17851"/>
<dbReference type="PRO" id="PR:Q17851"/>
<dbReference type="Proteomes" id="UP000001940">
    <property type="component" value="Chromosome IV"/>
</dbReference>
<dbReference type="Bgee" id="WBGene00015628">
    <property type="expression patterns" value="Expressed in adult organism and 1 other cell type or tissue"/>
</dbReference>
<dbReference type="GO" id="GO:0016020">
    <property type="term" value="C:membrane"/>
    <property type="evidence" value="ECO:0007669"/>
    <property type="project" value="UniProtKB-SubCell"/>
</dbReference>
<dbReference type="GO" id="GO:0005254">
    <property type="term" value="F:chloride channel activity"/>
    <property type="evidence" value="ECO:0000318"/>
    <property type="project" value="GO_Central"/>
</dbReference>
<dbReference type="InterPro" id="IPR000615">
    <property type="entry name" value="Bestrophin"/>
</dbReference>
<dbReference type="InterPro" id="IPR021134">
    <property type="entry name" value="Bestrophin-like"/>
</dbReference>
<dbReference type="PANTHER" id="PTHR10736">
    <property type="entry name" value="BESTROPHIN"/>
    <property type="match status" value="1"/>
</dbReference>
<dbReference type="PANTHER" id="PTHR10736:SF58">
    <property type="entry name" value="BESTROPHIN HOMOLOG-RELATED"/>
    <property type="match status" value="1"/>
</dbReference>
<dbReference type="Pfam" id="PF01062">
    <property type="entry name" value="Bestrophin"/>
    <property type="match status" value="1"/>
</dbReference>
<keyword id="KW-0472">Membrane</keyword>
<keyword id="KW-1185">Reference proteome</keyword>
<keyword id="KW-0677">Repeat</keyword>
<keyword id="KW-0812">Transmembrane</keyword>
<keyword id="KW-1133">Transmembrane helix</keyword>
<protein>
    <recommendedName>
        <fullName>Bestrophin-6</fullName>
    </recommendedName>
</protein>
<reference key="1">
    <citation type="journal article" date="1998" name="Science">
        <title>Genome sequence of the nematode C. elegans: a platform for investigating biology.</title>
        <authorList>
            <consortium name="The C. elegans sequencing consortium"/>
        </authorList>
    </citation>
    <scope>NUCLEOTIDE SEQUENCE [LARGE SCALE GENOMIC DNA]</scope>
    <source>
        <strain>Bristol N2</strain>
    </source>
</reference>
<sequence length="382" mass="44572">MTISYTYDVATESYFGFFKVLFRWKGSVWKLIHRELFMWLVLYYTVLAIYRTLDEERKKIFRSNIEHFINFEPSILTFMLSFFVTTIVQRWNNVFTNMGFIENAAYAVSSFMKNGEDVRRAQRTVIRYLVASQILVMRSISIKALRRFPNYESIVTAGFLTKEESTIIQNTDLSYDSSCVPIRWAIQVLRHQYRSGNFFSHSVYRATWKEVSDFETHLSRVRKVDWVPIPLAYPQVIFFAVRLYFVICAFAKQYFDLDDDDARYVIHYYFPIVTVFQFICLMGWLKVAEALLNPLGEDDDDFEVNFLIDSNIYTGMLIIETSKPPPLKPDLFEDRNFGPIYPNNITDQSVGQALCGSVENIKLAGKDASIEVKKNGENNPPA</sequence>
<evidence type="ECO:0000255" key="1"/>
<evidence type="ECO:0000305" key="2"/>
<accession>Q17851</accession>
<accession>D0VWM1</accession>
<gene>
    <name type="primary">best-6</name>
    <name type="ORF">C09B9.3</name>
</gene>
<organism>
    <name type="scientific">Caenorhabditis elegans</name>
    <dbReference type="NCBI Taxonomy" id="6239"/>
    <lineage>
        <taxon>Eukaryota</taxon>
        <taxon>Metazoa</taxon>
        <taxon>Ecdysozoa</taxon>
        <taxon>Nematoda</taxon>
        <taxon>Chromadorea</taxon>
        <taxon>Rhabditida</taxon>
        <taxon>Rhabditina</taxon>
        <taxon>Rhabditomorpha</taxon>
        <taxon>Rhabditoidea</taxon>
        <taxon>Rhabditidae</taxon>
        <taxon>Peloderinae</taxon>
        <taxon>Caenorhabditis</taxon>
    </lineage>
</organism>
<feature type="chain" id="PRO_0000143127" description="Bestrophin-6">
    <location>
        <begin position="1"/>
        <end position="382"/>
    </location>
</feature>
<feature type="transmembrane region" description="Helical" evidence="1">
    <location>
        <begin position="29"/>
        <end position="49"/>
    </location>
</feature>
<feature type="transmembrane region" description="Helical" evidence="1">
    <location>
        <begin position="68"/>
        <end position="88"/>
    </location>
</feature>
<feature type="transmembrane region" description="Helical" evidence="1">
    <location>
        <begin position="231"/>
        <end position="251"/>
    </location>
</feature>
<feature type="transmembrane region" description="Helical" evidence="1">
    <location>
        <begin position="265"/>
        <end position="285"/>
    </location>
</feature>